<protein>
    <recommendedName>
        <fullName evidence="1">Phosphopantetheine adenylyltransferase</fullName>
        <ecNumber evidence="1">2.7.7.3</ecNumber>
    </recommendedName>
    <alternativeName>
        <fullName evidence="1">Dephospho-CoA pyrophosphorylase</fullName>
    </alternativeName>
    <alternativeName>
        <fullName evidence="1">Pantetheine-phosphate adenylyltransferase</fullName>
        <shortName evidence="1">PPAT</shortName>
    </alternativeName>
</protein>
<organism>
    <name type="scientific">Xanthomonas campestris pv. campestris (strain B100)</name>
    <dbReference type="NCBI Taxonomy" id="509169"/>
    <lineage>
        <taxon>Bacteria</taxon>
        <taxon>Pseudomonadati</taxon>
        <taxon>Pseudomonadota</taxon>
        <taxon>Gammaproteobacteria</taxon>
        <taxon>Lysobacterales</taxon>
        <taxon>Lysobacteraceae</taxon>
        <taxon>Xanthomonas</taxon>
    </lineage>
</organism>
<accession>B0RRP8</accession>
<feature type="chain" id="PRO_1000096858" description="Phosphopantetheine adenylyltransferase">
    <location>
        <begin position="1"/>
        <end position="168"/>
    </location>
</feature>
<feature type="binding site" evidence="1">
    <location>
        <begin position="14"/>
        <end position="15"/>
    </location>
    <ligand>
        <name>ATP</name>
        <dbReference type="ChEBI" id="CHEBI:30616"/>
    </ligand>
</feature>
<feature type="binding site" evidence="1">
    <location>
        <position position="14"/>
    </location>
    <ligand>
        <name>substrate</name>
    </ligand>
</feature>
<feature type="binding site" evidence="1">
    <location>
        <position position="22"/>
    </location>
    <ligand>
        <name>ATP</name>
        <dbReference type="ChEBI" id="CHEBI:30616"/>
    </ligand>
</feature>
<feature type="binding site" evidence="1">
    <location>
        <position position="46"/>
    </location>
    <ligand>
        <name>substrate</name>
    </ligand>
</feature>
<feature type="binding site" evidence="1">
    <location>
        <position position="78"/>
    </location>
    <ligand>
        <name>substrate</name>
    </ligand>
</feature>
<feature type="binding site" evidence="1">
    <location>
        <position position="92"/>
    </location>
    <ligand>
        <name>substrate</name>
    </ligand>
</feature>
<feature type="binding site" evidence="1">
    <location>
        <begin position="93"/>
        <end position="95"/>
    </location>
    <ligand>
        <name>ATP</name>
        <dbReference type="ChEBI" id="CHEBI:30616"/>
    </ligand>
</feature>
<feature type="binding site" evidence="1">
    <location>
        <position position="103"/>
    </location>
    <ligand>
        <name>ATP</name>
        <dbReference type="ChEBI" id="CHEBI:30616"/>
    </ligand>
</feature>
<feature type="binding site" evidence="1">
    <location>
        <begin position="128"/>
        <end position="134"/>
    </location>
    <ligand>
        <name>ATP</name>
        <dbReference type="ChEBI" id="CHEBI:30616"/>
    </ligand>
</feature>
<feature type="site" description="Transition state stabilizer" evidence="1">
    <location>
        <position position="22"/>
    </location>
</feature>
<keyword id="KW-0067">ATP-binding</keyword>
<keyword id="KW-0173">Coenzyme A biosynthesis</keyword>
<keyword id="KW-0963">Cytoplasm</keyword>
<keyword id="KW-0460">Magnesium</keyword>
<keyword id="KW-0547">Nucleotide-binding</keyword>
<keyword id="KW-0548">Nucleotidyltransferase</keyword>
<keyword id="KW-0808">Transferase</keyword>
<evidence type="ECO:0000255" key="1">
    <source>
        <dbReference type="HAMAP-Rule" id="MF_00151"/>
    </source>
</evidence>
<comment type="function">
    <text evidence="1">Reversibly transfers an adenylyl group from ATP to 4'-phosphopantetheine, yielding dephospho-CoA (dPCoA) and pyrophosphate.</text>
</comment>
<comment type="catalytic activity">
    <reaction evidence="1">
        <text>(R)-4'-phosphopantetheine + ATP + H(+) = 3'-dephospho-CoA + diphosphate</text>
        <dbReference type="Rhea" id="RHEA:19801"/>
        <dbReference type="ChEBI" id="CHEBI:15378"/>
        <dbReference type="ChEBI" id="CHEBI:30616"/>
        <dbReference type="ChEBI" id="CHEBI:33019"/>
        <dbReference type="ChEBI" id="CHEBI:57328"/>
        <dbReference type="ChEBI" id="CHEBI:61723"/>
        <dbReference type="EC" id="2.7.7.3"/>
    </reaction>
</comment>
<comment type="cofactor">
    <cofactor evidence="1">
        <name>Mg(2+)</name>
        <dbReference type="ChEBI" id="CHEBI:18420"/>
    </cofactor>
</comment>
<comment type="pathway">
    <text evidence="1">Cofactor biosynthesis; coenzyme A biosynthesis; CoA from (R)-pantothenate: step 4/5.</text>
</comment>
<comment type="subunit">
    <text evidence="1">Homohexamer.</text>
</comment>
<comment type="subcellular location">
    <subcellularLocation>
        <location evidence="1">Cytoplasm</location>
    </subcellularLocation>
</comment>
<comment type="similarity">
    <text evidence="1">Belongs to the bacterial CoaD family.</text>
</comment>
<sequence length="168" mass="18351">MSVANSRIAVYPGTFDPITNGHIDLVNRAAPLFERVVVGVAYSPSKGPALPLERRVELAQEALAAHANVEVRGFDTLLAHFVRDMGAGVLLRGLRAVSDFEYEFQMASMNRHLIPEVETLFLTPAEQYSFISSSLVREIARLGGDVSGFVPASVVDALRQVRESRAQV</sequence>
<proteinExistence type="inferred from homology"/>
<name>COAD_XANCB</name>
<reference key="1">
    <citation type="journal article" date="2008" name="J. Biotechnol.">
        <title>The genome of Xanthomonas campestris pv. campestris B100 and its use for the reconstruction of metabolic pathways involved in xanthan biosynthesis.</title>
        <authorList>
            <person name="Vorhoelter F.-J."/>
            <person name="Schneiker S."/>
            <person name="Goesmann A."/>
            <person name="Krause L."/>
            <person name="Bekel T."/>
            <person name="Kaiser O."/>
            <person name="Linke B."/>
            <person name="Patschkowski T."/>
            <person name="Rueckert C."/>
            <person name="Schmid J."/>
            <person name="Sidhu V.K."/>
            <person name="Sieber V."/>
            <person name="Tauch A."/>
            <person name="Watt S.A."/>
            <person name="Weisshaar B."/>
            <person name="Becker A."/>
            <person name="Niehaus K."/>
            <person name="Puehler A."/>
        </authorList>
    </citation>
    <scope>NUCLEOTIDE SEQUENCE [LARGE SCALE GENOMIC DNA]</scope>
    <source>
        <strain>B100</strain>
    </source>
</reference>
<dbReference type="EC" id="2.7.7.3" evidence="1"/>
<dbReference type="EMBL" id="AM920689">
    <property type="protein sequence ID" value="CAP51133.1"/>
    <property type="molecule type" value="Genomic_DNA"/>
</dbReference>
<dbReference type="SMR" id="B0RRP8"/>
<dbReference type="KEGG" id="xca:xcc-b100_1781"/>
<dbReference type="HOGENOM" id="CLU_100149_0_1_6"/>
<dbReference type="UniPathway" id="UPA00241">
    <property type="reaction ID" value="UER00355"/>
</dbReference>
<dbReference type="Proteomes" id="UP000001188">
    <property type="component" value="Chromosome"/>
</dbReference>
<dbReference type="GO" id="GO:0005737">
    <property type="term" value="C:cytoplasm"/>
    <property type="evidence" value="ECO:0007669"/>
    <property type="project" value="UniProtKB-SubCell"/>
</dbReference>
<dbReference type="GO" id="GO:0005524">
    <property type="term" value="F:ATP binding"/>
    <property type="evidence" value="ECO:0007669"/>
    <property type="project" value="UniProtKB-KW"/>
</dbReference>
<dbReference type="GO" id="GO:0004595">
    <property type="term" value="F:pantetheine-phosphate adenylyltransferase activity"/>
    <property type="evidence" value="ECO:0007669"/>
    <property type="project" value="UniProtKB-UniRule"/>
</dbReference>
<dbReference type="GO" id="GO:0015937">
    <property type="term" value="P:coenzyme A biosynthetic process"/>
    <property type="evidence" value="ECO:0007669"/>
    <property type="project" value="UniProtKB-UniRule"/>
</dbReference>
<dbReference type="CDD" id="cd02163">
    <property type="entry name" value="PPAT"/>
    <property type="match status" value="1"/>
</dbReference>
<dbReference type="Gene3D" id="3.40.50.620">
    <property type="entry name" value="HUPs"/>
    <property type="match status" value="1"/>
</dbReference>
<dbReference type="HAMAP" id="MF_00151">
    <property type="entry name" value="PPAT_bact"/>
    <property type="match status" value="1"/>
</dbReference>
<dbReference type="InterPro" id="IPR004821">
    <property type="entry name" value="Cyt_trans-like"/>
</dbReference>
<dbReference type="InterPro" id="IPR001980">
    <property type="entry name" value="PPAT"/>
</dbReference>
<dbReference type="InterPro" id="IPR014729">
    <property type="entry name" value="Rossmann-like_a/b/a_fold"/>
</dbReference>
<dbReference type="NCBIfam" id="TIGR01510">
    <property type="entry name" value="coaD_prev_kdtB"/>
    <property type="match status" value="1"/>
</dbReference>
<dbReference type="NCBIfam" id="TIGR00125">
    <property type="entry name" value="cyt_tran_rel"/>
    <property type="match status" value="1"/>
</dbReference>
<dbReference type="PANTHER" id="PTHR21342">
    <property type="entry name" value="PHOSPHOPANTETHEINE ADENYLYLTRANSFERASE"/>
    <property type="match status" value="1"/>
</dbReference>
<dbReference type="PANTHER" id="PTHR21342:SF1">
    <property type="entry name" value="PHOSPHOPANTETHEINE ADENYLYLTRANSFERASE"/>
    <property type="match status" value="1"/>
</dbReference>
<dbReference type="Pfam" id="PF01467">
    <property type="entry name" value="CTP_transf_like"/>
    <property type="match status" value="1"/>
</dbReference>
<dbReference type="PRINTS" id="PR01020">
    <property type="entry name" value="LPSBIOSNTHSS"/>
</dbReference>
<dbReference type="SUPFAM" id="SSF52374">
    <property type="entry name" value="Nucleotidylyl transferase"/>
    <property type="match status" value="1"/>
</dbReference>
<gene>
    <name evidence="1" type="primary">coaD</name>
    <name type="ordered locus">xcc-b100_1781</name>
</gene>